<keyword id="KW-0687">Ribonucleoprotein</keyword>
<keyword id="KW-0689">Ribosomal protein</keyword>
<sequence>MAKVVITLVKSPIGYEKSQRATVVALGFKKGKRVVEKEATPQINGMINKISHLLKVEYK</sequence>
<feature type="chain" id="PRO_1000184127" description="Large ribosomal subunit protein uL30">
    <location>
        <begin position="1"/>
        <end position="59"/>
    </location>
</feature>
<accession>C0QW13</accession>
<evidence type="ECO:0000255" key="1">
    <source>
        <dbReference type="HAMAP-Rule" id="MF_01371"/>
    </source>
</evidence>
<evidence type="ECO:0000305" key="2"/>
<proteinExistence type="inferred from homology"/>
<protein>
    <recommendedName>
        <fullName evidence="1">Large ribosomal subunit protein uL30</fullName>
    </recommendedName>
    <alternativeName>
        <fullName evidence="2">50S ribosomal protein L30</fullName>
    </alternativeName>
</protein>
<gene>
    <name evidence="1" type="primary">rpmD</name>
    <name type="ordered locus">BHWA1_02141</name>
</gene>
<dbReference type="EMBL" id="CP001357">
    <property type="protein sequence ID" value="ACN84599.1"/>
    <property type="molecule type" value="Genomic_DNA"/>
</dbReference>
<dbReference type="RefSeq" id="WP_012671633.1">
    <property type="nucleotide sequence ID" value="NC_012225.1"/>
</dbReference>
<dbReference type="SMR" id="C0QW13"/>
<dbReference type="STRING" id="565034.BHWA1_02141"/>
<dbReference type="GeneID" id="63963294"/>
<dbReference type="KEGG" id="bhy:BHWA1_02141"/>
<dbReference type="eggNOG" id="COG1841">
    <property type="taxonomic scope" value="Bacteria"/>
</dbReference>
<dbReference type="HOGENOM" id="CLU_131047_2_1_12"/>
<dbReference type="Proteomes" id="UP000001803">
    <property type="component" value="Chromosome"/>
</dbReference>
<dbReference type="GO" id="GO:0022625">
    <property type="term" value="C:cytosolic large ribosomal subunit"/>
    <property type="evidence" value="ECO:0007669"/>
    <property type="project" value="TreeGrafter"/>
</dbReference>
<dbReference type="GO" id="GO:0003735">
    <property type="term" value="F:structural constituent of ribosome"/>
    <property type="evidence" value="ECO:0007669"/>
    <property type="project" value="InterPro"/>
</dbReference>
<dbReference type="GO" id="GO:0006412">
    <property type="term" value="P:translation"/>
    <property type="evidence" value="ECO:0007669"/>
    <property type="project" value="UniProtKB-UniRule"/>
</dbReference>
<dbReference type="CDD" id="cd01658">
    <property type="entry name" value="Ribosomal_L30"/>
    <property type="match status" value="1"/>
</dbReference>
<dbReference type="Gene3D" id="3.30.1390.20">
    <property type="entry name" value="Ribosomal protein L30, ferredoxin-like fold domain"/>
    <property type="match status" value="1"/>
</dbReference>
<dbReference type="HAMAP" id="MF_01371_B">
    <property type="entry name" value="Ribosomal_uL30_B"/>
    <property type="match status" value="1"/>
</dbReference>
<dbReference type="InterPro" id="IPR036919">
    <property type="entry name" value="Ribo_uL30_ferredoxin-like_sf"/>
</dbReference>
<dbReference type="InterPro" id="IPR005996">
    <property type="entry name" value="Ribosomal_uL30_bac-type"/>
</dbReference>
<dbReference type="InterPro" id="IPR016082">
    <property type="entry name" value="Ribosomal_uL30_ferredoxin-like"/>
</dbReference>
<dbReference type="NCBIfam" id="TIGR01308">
    <property type="entry name" value="rpmD_bact"/>
    <property type="match status" value="1"/>
</dbReference>
<dbReference type="PANTHER" id="PTHR15892:SF2">
    <property type="entry name" value="LARGE RIBOSOMAL SUBUNIT PROTEIN UL30M"/>
    <property type="match status" value="1"/>
</dbReference>
<dbReference type="PANTHER" id="PTHR15892">
    <property type="entry name" value="MITOCHONDRIAL RIBOSOMAL PROTEIN L30"/>
    <property type="match status" value="1"/>
</dbReference>
<dbReference type="Pfam" id="PF00327">
    <property type="entry name" value="Ribosomal_L30"/>
    <property type="match status" value="1"/>
</dbReference>
<dbReference type="PIRSF" id="PIRSF002211">
    <property type="entry name" value="Ribosomal_L30_bac-type"/>
    <property type="match status" value="1"/>
</dbReference>
<dbReference type="SUPFAM" id="SSF55129">
    <property type="entry name" value="Ribosomal protein L30p/L7e"/>
    <property type="match status" value="1"/>
</dbReference>
<reference key="1">
    <citation type="journal article" date="2009" name="PLoS ONE">
        <title>Genome sequence of the pathogenic intestinal spirochete Brachyspira hyodysenteriae reveals adaptations to its lifestyle in the porcine large intestine.</title>
        <authorList>
            <person name="Bellgard M.I."/>
            <person name="Wanchanthuek P."/>
            <person name="La T."/>
            <person name="Ryan K."/>
            <person name="Moolhuijzen P."/>
            <person name="Albertyn Z."/>
            <person name="Shaban B."/>
            <person name="Motro Y."/>
            <person name="Dunn D.S."/>
            <person name="Schibeci D."/>
            <person name="Hunter A."/>
            <person name="Barrero R."/>
            <person name="Phillips N.D."/>
            <person name="Hampson D.J."/>
        </authorList>
    </citation>
    <scope>NUCLEOTIDE SEQUENCE [LARGE SCALE GENOMIC DNA]</scope>
    <source>
        <strain>ATCC 49526 / WA1</strain>
    </source>
</reference>
<comment type="subunit">
    <text evidence="1">Part of the 50S ribosomal subunit.</text>
</comment>
<comment type="similarity">
    <text evidence="1">Belongs to the universal ribosomal protein uL30 family.</text>
</comment>
<organism>
    <name type="scientific">Brachyspira hyodysenteriae (strain ATCC 49526 / WA1)</name>
    <dbReference type="NCBI Taxonomy" id="565034"/>
    <lineage>
        <taxon>Bacteria</taxon>
        <taxon>Pseudomonadati</taxon>
        <taxon>Spirochaetota</taxon>
        <taxon>Spirochaetia</taxon>
        <taxon>Brachyspirales</taxon>
        <taxon>Brachyspiraceae</taxon>
        <taxon>Brachyspira</taxon>
    </lineage>
</organism>
<name>RL30_BRAHW</name>